<evidence type="ECO:0000250" key="1"/>
<evidence type="ECO:0000255" key="2"/>
<evidence type="ECO:0000305" key="3"/>
<proteinExistence type="inferred from homology"/>
<protein>
    <recommendedName>
        <fullName>Heme exporter protein C</fullName>
    </recommendedName>
    <alternativeName>
        <fullName>Cytochrome c-type biogenesis protein CcmC</fullName>
    </alternativeName>
</protein>
<name>CCMC_PSEAE</name>
<sequence length="252" mass="28289">MMNWTWFHKLGSPKWFYEISGRWLPWFAVAAALLIVTGCVWGLAFAPPDYQQGNSFRIIYIHVPAAFLAQSCYVMLAVAGAVGLIWKMKIADVAVQCAAPIGAWMTFVALLTGAVWGKPTWGAWWVWDARLTAMLILLFLYFGIIALGQAISNRDSAAKACAVLAIVGVVNIPIIKYSVEWWNTLHQPATFTITEKPAMPVEMWLPLLIMVLGFYCFFAAMLLVRMRLEVLKRESRTAWAKAEVKALVEKAR</sequence>
<reference key="1">
    <citation type="journal article" date="2000" name="Nature">
        <title>Complete genome sequence of Pseudomonas aeruginosa PAO1, an opportunistic pathogen.</title>
        <authorList>
            <person name="Stover C.K."/>
            <person name="Pham X.-Q.T."/>
            <person name="Erwin A.L."/>
            <person name="Mizoguchi S.D."/>
            <person name="Warrener P."/>
            <person name="Hickey M.J."/>
            <person name="Brinkman F.S.L."/>
            <person name="Hufnagle W.O."/>
            <person name="Kowalik D.J."/>
            <person name="Lagrou M."/>
            <person name="Garber R.L."/>
            <person name="Goltry L."/>
            <person name="Tolentino E."/>
            <person name="Westbrock-Wadman S."/>
            <person name="Yuan Y."/>
            <person name="Brody L.L."/>
            <person name="Coulter S.N."/>
            <person name="Folger K.R."/>
            <person name="Kas A."/>
            <person name="Larbig K."/>
            <person name="Lim R.M."/>
            <person name="Smith K.A."/>
            <person name="Spencer D.H."/>
            <person name="Wong G.K.-S."/>
            <person name="Wu Z."/>
            <person name="Paulsen I.T."/>
            <person name="Reizer J."/>
            <person name="Saier M.H. Jr."/>
            <person name="Hancock R.E.W."/>
            <person name="Lory S."/>
            <person name="Olson M.V."/>
        </authorList>
    </citation>
    <scope>NUCLEOTIDE SEQUENCE [LARGE SCALE GENOMIC DNA]</scope>
    <source>
        <strain>ATCC 15692 / DSM 22644 / CIP 104116 / JCM 14847 / LMG 12228 / 1C / PRS 101 / PAO1</strain>
    </source>
</reference>
<gene>
    <name type="primary">ccmC</name>
    <name type="ordered locus">PA1477</name>
</gene>
<feature type="chain" id="PRO_0000287762" description="Heme exporter protein C">
    <location>
        <begin position="1"/>
        <end position="252"/>
    </location>
</feature>
<feature type="transmembrane region" description="Helical" evidence="2">
    <location>
        <begin position="26"/>
        <end position="46"/>
    </location>
</feature>
<feature type="transmembrane region" description="Helical" evidence="2">
    <location>
        <begin position="66"/>
        <end position="86"/>
    </location>
</feature>
<feature type="transmembrane region" description="Helical" evidence="2">
    <location>
        <begin position="97"/>
        <end position="117"/>
    </location>
</feature>
<feature type="transmembrane region" description="Helical" evidence="2">
    <location>
        <begin position="131"/>
        <end position="151"/>
    </location>
</feature>
<feature type="transmembrane region" description="Helical" evidence="2">
    <location>
        <begin position="162"/>
        <end position="182"/>
    </location>
</feature>
<feature type="transmembrane region" description="Helical" evidence="2">
    <location>
        <begin position="204"/>
        <end position="224"/>
    </location>
</feature>
<organism>
    <name type="scientific">Pseudomonas aeruginosa (strain ATCC 15692 / DSM 22644 / CIP 104116 / JCM 14847 / LMG 12228 / 1C / PRS 101 / PAO1)</name>
    <dbReference type="NCBI Taxonomy" id="208964"/>
    <lineage>
        <taxon>Bacteria</taxon>
        <taxon>Pseudomonadati</taxon>
        <taxon>Pseudomonadota</taxon>
        <taxon>Gammaproteobacteria</taxon>
        <taxon>Pseudomonadales</taxon>
        <taxon>Pseudomonadaceae</taxon>
        <taxon>Pseudomonas</taxon>
    </lineage>
</organism>
<keyword id="KW-0997">Cell inner membrane</keyword>
<keyword id="KW-1003">Cell membrane</keyword>
<keyword id="KW-0201">Cytochrome c-type biogenesis</keyword>
<keyword id="KW-0472">Membrane</keyword>
<keyword id="KW-1185">Reference proteome</keyword>
<keyword id="KW-0812">Transmembrane</keyword>
<keyword id="KW-1133">Transmembrane helix</keyword>
<keyword id="KW-0813">Transport</keyword>
<accession>Q9I3N5</accession>
<dbReference type="EMBL" id="AE004091">
    <property type="protein sequence ID" value="AAG04866.1"/>
    <property type="molecule type" value="Genomic_DNA"/>
</dbReference>
<dbReference type="PIR" id="F83459">
    <property type="entry name" value="F83459"/>
</dbReference>
<dbReference type="RefSeq" id="NP_250168.1">
    <property type="nucleotide sequence ID" value="NC_002516.2"/>
</dbReference>
<dbReference type="RefSeq" id="WP_003083135.1">
    <property type="nucleotide sequence ID" value="NZ_QZGE01000005.1"/>
</dbReference>
<dbReference type="SMR" id="Q9I3N5"/>
<dbReference type="FunCoup" id="Q9I3N5">
    <property type="interactions" value="367"/>
</dbReference>
<dbReference type="STRING" id="208964.PA1477"/>
<dbReference type="TCDB" id="9.B.14.2.4">
    <property type="family name" value="the putative heme handling protein (hhp) family"/>
</dbReference>
<dbReference type="PaxDb" id="208964-PA1477"/>
<dbReference type="DNASU" id="881087"/>
<dbReference type="GeneID" id="881087"/>
<dbReference type="KEGG" id="pae:PA1477"/>
<dbReference type="PATRIC" id="fig|208964.12.peg.1528"/>
<dbReference type="PseudoCAP" id="PA1477"/>
<dbReference type="HOGENOM" id="CLU_066538_2_0_6"/>
<dbReference type="InParanoid" id="Q9I3N5"/>
<dbReference type="OrthoDB" id="9778550at2"/>
<dbReference type="PhylomeDB" id="Q9I3N5"/>
<dbReference type="BioCyc" id="PAER208964:G1FZ6-1503-MONOMER"/>
<dbReference type="Proteomes" id="UP000002438">
    <property type="component" value="Chromosome"/>
</dbReference>
<dbReference type="GO" id="GO:0005886">
    <property type="term" value="C:plasma membrane"/>
    <property type="evidence" value="ECO:0000318"/>
    <property type="project" value="GO_Central"/>
</dbReference>
<dbReference type="GO" id="GO:0004096">
    <property type="term" value="F:catalase activity"/>
    <property type="evidence" value="ECO:0000315"/>
    <property type="project" value="PseudoCAP"/>
</dbReference>
<dbReference type="GO" id="GO:0020037">
    <property type="term" value="F:heme binding"/>
    <property type="evidence" value="ECO:0007669"/>
    <property type="project" value="InterPro"/>
</dbReference>
<dbReference type="GO" id="GO:0015232">
    <property type="term" value="F:heme transmembrane transporter activity"/>
    <property type="evidence" value="ECO:0007669"/>
    <property type="project" value="InterPro"/>
</dbReference>
<dbReference type="GO" id="GO:0071978">
    <property type="term" value="P:bacterial-type flagellum-dependent swarming motility"/>
    <property type="evidence" value="ECO:0000315"/>
    <property type="project" value="PseudoCAP"/>
</dbReference>
<dbReference type="GO" id="GO:0071977">
    <property type="term" value="P:bacterial-type flagellum-dependent swimming motility"/>
    <property type="evidence" value="ECO:0000315"/>
    <property type="project" value="PseudoCAP"/>
</dbReference>
<dbReference type="GO" id="GO:0017004">
    <property type="term" value="P:cytochrome complex assembly"/>
    <property type="evidence" value="ECO:0007669"/>
    <property type="project" value="UniProtKB-KW"/>
</dbReference>
<dbReference type="GO" id="GO:0009247">
    <property type="term" value="P:glycolipid biosynthetic process"/>
    <property type="evidence" value="ECO:0000315"/>
    <property type="project" value="PseudoCAP"/>
</dbReference>
<dbReference type="GO" id="GO:0002049">
    <property type="term" value="P:pyoverdine biosynthetic process"/>
    <property type="evidence" value="ECO:0000315"/>
    <property type="project" value="PseudoCAP"/>
</dbReference>
<dbReference type="GO" id="GO:0043107">
    <property type="term" value="P:type IV pilus-dependent motility"/>
    <property type="evidence" value="ECO:0000315"/>
    <property type="project" value="PseudoCAP"/>
</dbReference>
<dbReference type="InterPro" id="IPR002541">
    <property type="entry name" value="Cyt_c_assembly"/>
</dbReference>
<dbReference type="InterPro" id="IPR003557">
    <property type="entry name" value="Cyt_c_biogenesis_CcmC"/>
</dbReference>
<dbReference type="InterPro" id="IPR045062">
    <property type="entry name" value="Cyt_c_biogenesis_CcsA/CcmC"/>
</dbReference>
<dbReference type="NCBIfam" id="TIGR01191">
    <property type="entry name" value="ccmC"/>
    <property type="match status" value="1"/>
</dbReference>
<dbReference type="PANTHER" id="PTHR30071:SF1">
    <property type="entry name" value="CYTOCHROME B_B6 PROTEIN-RELATED"/>
    <property type="match status" value="1"/>
</dbReference>
<dbReference type="PANTHER" id="PTHR30071">
    <property type="entry name" value="HEME EXPORTER PROTEIN C"/>
    <property type="match status" value="1"/>
</dbReference>
<dbReference type="Pfam" id="PF01578">
    <property type="entry name" value="Cytochrom_C_asm"/>
    <property type="match status" value="1"/>
</dbReference>
<dbReference type="PRINTS" id="PR01386">
    <property type="entry name" value="CCMCBIOGNSIS"/>
</dbReference>
<comment type="function">
    <text evidence="1">Required for the export of heme to the periplasm for the biogenesis of c-type cytochromes.</text>
</comment>
<comment type="subcellular location">
    <subcellularLocation>
        <location evidence="3">Cell inner membrane</location>
        <topology evidence="3">Multi-pass membrane protein</topology>
    </subcellularLocation>
</comment>
<comment type="similarity">
    <text evidence="3">Belongs to the CcmC/CycZ/HelC family.</text>
</comment>